<organism>
    <name type="scientific">Homo sapiens</name>
    <name type="common">Human</name>
    <dbReference type="NCBI Taxonomy" id="9606"/>
    <lineage>
        <taxon>Eukaryota</taxon>
        <taxon>Metazoa</taxon>
        <taxon>Chordata</taxon>
        <taxon>Craniata</taxon>
        <taxon>Vertebrata</taxon>
        <taxon>Euteleostomi</taxon>
        <taxon>Mammalia</taxon>
        <taxon>Eutheria</taxon>
        <taxon>Euarchontoglires</taxon>
        <taxon>Primates</taxon>
        <taxon>Haplorrhini</taxon>
        <taxon>Catarrhini</taxon>
        <taxon>Hominidae</taxon>
        <taxon>Homo</taxon>
    </lineage>
</organism>
<proteinExistence type="evidence at transcript level"/>
<protein>
    <recommendedName>
        <fullName evidence="3">Golgin subfamily A member 8F</fullName>
    </recommendedName>
</protein>
<comment type="alternative products">
    <event type="alternative splicing"/>
    <isoform>
        <id>P0DX52-1</id>
        <id>Q08AF8-1</id>
        <name>1</name>
        <sequence type="displayed"/>
    </isoform>
    <isoform>
        <id>P0DX52-2</id>
        <id>Q08AF8-4</id>
        <name>4</name>
        <sequence type="described" ref="VSP_062045 VSP_062046"/>
    </isoform>
</comment>
<comment type="miscellaneous">
    <molecule>Isoform 4</molecule>
    <text evidence="3">May be produced at very low levels due to a premature stop codon in the mRNA, leading to nonsense-mediated mRNA decay.</text>
</comment>
<comment type="similarity">
    <text evidence="3">Belongs to the GOLGA8 family.</text>
</comment>
<comment type="caution">
    <text evidence="3">A family of highly similar proteins (GOLGA8A, GOLGA8B, GOLGA8C, GOLGA8D, GOLGA8E, GOLGA8F, GOLGA8G) are encoded by a repeated region on chromosome 15q11-15q13. Our sequences are in agreement with HGNC nomenclature.</text>
</comment>
<comment type="sequence caution" evidence="3">
    <conflict type="erroneous translation">
        <sequence resource="EMBL-CDS" id="AAI50303"/>
    </conflict>
    <text>Wrong choice of CDS.</text>
</comment>
<comment type="sequence caution" evidence="3">
    <conflict type="erroneous translation">
        <sequence resource="EMBL-CDS" id="ABD73922"/>
    </conflict>
    <text>Wrong choice of CDS.</text>
</comment>
<evidence type="ECO:0000255" key="1"/>
<evidence type="ECO:0000256" key="2">
    <source>
        <dbReference type="SAM" id="MobiDB-lite"/>
    </source>
</evidence>
<evidence type="ECO:0000305" key="3"/>
<evidence type="ECO:0000312" key="4">
    <source>
        <dbReference type="HGNC" id="HGNC:32378"/>
    </source>
</evidence>
<accession>P0DX52</accession>
<accession>A4FTY1</accession>
<accession>Q08AF8</accession>
<accession>Q1A5X9</accession>
<accession>Q8NDK0</accession>
<keyword id="KW-0025">Alternative splicing</keyword>
<keyword id="KW-0175">Coiled coil</keyword>
<keyword id="KW-1185">Reference proteome</keyword>
<feature type="chain" id="PRO_0000459238" description="Golgin subfamily A member 8F">
    <location>
        <begin position="1"/>
        <end position="636"/>
    </location>
</feature>
<feature type="region of interest" description="Disordered" evidence="2">
    <location>
        <begin position="1"/>
        <end position="72"/>
    </location>
</feature>
<feature type="region of interest" description="Disordered" evidence="2">
    <location>
        <begin position="107"/>
        <end position="127"/>
    </location>
</feature>
<feature type="region of interest" description="Disordered" evidence="2">
    <location>
        <begin position="344"/>
        <end position="364"/>
    </location>
</feature>
<feature type="region of interest" description="Disordered" evidence="2">
    <location>
        <begin position="422"/>
        <end position="449"/>
    </location>
</feature>
<feature type="region of interest" description="Disordered" evidence="2">
    <location>
        <begin position="496"/>
        <end position="537"/>
    </location>
</feature>
<feature type="region of interest" description="Disordered" evidence="2">
    <location>
        <begin position="588"/>
        <end position="612"/>
    </location>
</feature>
<feature type="coiled-coil region" evidence="1">
    <location>
        <begin position="93"/>
        <end position="148"/>
    </location>
</feature>
<feature type="coiled-coil region" evidence="1">
    <location>
        <begin position="211"/>
        <end position="263"/>
    </location>
</feature>
<feature type="coiled-coil region" evidence="1">
    <location>
        <begin position="306"/>
        <end position="412"/>
    </location>
</feature>
<feature type="compositionally biased region" description="Polar residues" evidence="2">
    <location>
        <begin position="38"/>
        <end position="50"/>
    </location>
</feature>
<feature type="compositionally biased region" description="Basic and acidic residues" evidence="2">
    <location>
        <begin position="109"/>
        <end position="127"/>
    </location>
</feature>
<feature type="compositionally biased region" description="Basic and acidic residues" evidence="2">
    <location>
        <begin position="429"/>
        <end position="441"/>
    </location>
</feature>
<feature type="compositionally biased region" description="Gly residues" evidence="2">
    <location>
        <begin position="509"/>
        <end position="522"/>
    </location>
</feature>
<feature type="splice variant" id="VSP_062045" description="In isoform 4.">
    <original>EK</original>
    <variation>VT</variation>
    <location>
        <begin position="117"/>
        <end position="118"/>
    </location>
</feature>
<feature type="splice variant" id="VSP_062046" description="In isoform 4.">
    <location>
        <begin position="119"/>
        <end position="636"/>
    </location>
</feature>
<sequence length="636" mass="71572">MAEETRQSKLAAAKRKLKEYWQRNSPGVPAGAKRNRKTNGSIHETATSGGCHSPGDSATGIHGESPTSSATLKDLESPCQELAVVPDSRSVKVSQLKNTIKSLKQQNKQVEHQLEEEKKANNEKQKAERELEVQIQRLNIQKGKLNTDLYHTKRSLRYFEEESKDLAVRLQHSLQRKGELERALSAVTATQKKKAERQFSSRSKARMEWKLEQSMREQALLKAQLTQLKESLKEVQLERDEYAEHLKGERARWQQRMRKMSQEVCSLKKEKKHDKYRVEKLERSLSKLKHQMAEPLPPEPPAVPSEVELQHLRKELERVAGELQAQVEYNQRISLLNEGQKERLREQEERLQEQQERLPEQEERLQQLAEPQNSFKELNNENKSVLQLEQQVKELQEKLGKERLEAASQQKQQLTAQLSLMALPGEGDGGGHLDSEGEEAPRPIPSIPQDLESREAMSGFMDHLEEKADLSELVEKEELGFFQYYRERCHQKVYHPITKPGGSAKDAAPGGGHHQAGPGQGGDEGEAAGAAGDGVAAGGDYKGHSKFLVTAQNPAHEPSPGAPAPQELGAAHKHGDLCEVSLTDSVEPVQGEAREGSPHDNPTAQPIVQDHQEHPGLGSNCCVPFFCWAWLPRRRR</sequence>
<dbReference type="EMBL" id="DQ309038">
    <property type="protein sequence ID" value="ABD73922.1"/>
    <property type="status" value="ALT_SEQ"/>
    <property type="molecule type" value="mRNA"/>
</dbReference>
<dbReference type="EMBL" id="AC091304">
    <property type="status" value="NOT_ANNOTATED_CDS"/>
    <property type="molecule type" value="Genomic_DNA"/>
</dbReference>
<dbReference type="EMBL" id="BC150302">
    <property type="protein sequence ID" value="AAI50303.1"/>
    <property type="status" value="ALT_SEQ"/>
    <property type="molecule type" value="mRNA"/>
</dbReference>
<dbReference type="EMBL" id="AL833871">
    <property type="protein sequence ID" value="CAD38728.1"/>
    <property type="molecule type" value="mRNA"/>
</dbReference>
<dbReference type="CCDS" id="CCDS86437.2"/>
<dbReference type="RefSeq" id="NP_001337849.2">
    <molecule id="P0DX52-1"/>
    <property type="nucleotide sequence ID" value="NM_001350920.2"/>
</dbReference>
<dbReference type="SMR" id="P0DX52"/>
<dbReference type="GlyGen" id="P0DX52">
    <property type="glycosylation" value="1 site"/>
</dbReference>
<dbReference type="BioMuta" id="GOLGA8G"/>
<dbReference type="DMDM" id="121939991"/>
<dbReference type="PeptideAtlas" id="P0DX52"/>
<dbReference type="Ensembl" id="ENST00000526619.7">
    <molecule id="P0DX52-1"/>
    <property type="protein sequence ID" value="ENSP00000456138.3"/>
    <property type="gene ID" value="ENSG00000153684.16"/>
</dbReference>
<dbReference type="GeneID" id="100132565"/>
<dbReference type="MANE-Select" id="ENST00000526619.7">
    <property type="protein sequence ID" value="ENSP00000456138.3"/>
    <property type="RefSeq nucleotide sequence ID" value="NM_001350920.2"/>
    <property type="RefSeq protein sequence ID" value="NP_001337849.2"/>
</dbReference>
<dbReference type="AGR" id="HGNC:32378"/>
<dbReference type="GeneCards" id="GOLGA8F"/>
<dbReference type="HGNC" id="HGNC:32378">
    <property type="gene designation" value="GOLGA8F"/>
</dbReference>
<dbReference type="HPA" id="ENSG00000153684">
    <property type="expression patterns" value="Tissue enriched (testis)"/>
</dbReference>
<dbReference type="neXtProt" id="NX_Q08AF8"/>
<dbReference type="OpenTargets" id="ENSG00000153684"/>
<dbReference type="GeneTree" id="ENSGT00530000062932"/>
<dbReference type="HOGENOM" id="CLU_012403_1_0_1"/>
<dbReference type="InParanoid" id="Q08AF8"/>
<dbReference type="PhylomeDB" id="Q08AF8"/>
<dbReference type="PathwayCommons" id="Q08AF8"/>
<dbReference type="SignaLink" id="Q08AF8"/>
<dbReference type="Proteomes" id="UP000005640">
    <property type="component" value="Chromosome 15"/>
</dbReference>
<dbReference type="GO" id="GO:0005801">
    <property type="term" value="C:cis-Golgi network"/>
    <property type="evidence" value="ECO:0007669"/>
    <property type="project" value="InterPro"/>
</dbReference>
<dbReference type="InterPro" id="IPR043937">
    <property type="entry name" value="GM130_C"/>
</dbReference>
<dbReference type="InterPro" id="IPR043976">
    <property type="entry name" value="GOLGA_cons_dom"/>
</dbReference>
<dbReference type="InterPro" id="IPR024858">
    <property type="entry name" value="Golgin_A"/>
</dbReference>
<dbReference type="PANTHER" id="PTHR10881:SF7">
    <property type="entry name" value="GOLGIN SUBFAMILY A MEMBER 8C-RELATED"/>
    <property type="match status" value="1"/>
</dbReference>
<dbReference type="PANTHER" id="PTHR10881">
    <property type="entry name" value="GOLGIN SUBFAMILY A MEMBER-RELATED"/>
    <property type="match status" value="1"/>
</dbReference>
<dbReference type="Pfam" id="PF19046">
    <property type="entry name" value="GM130_C"/>
    <property type="match status" value="1"/>
</dbReference>
<dbReference type="Pfam" id="PF15070">
    <property type="entry name" value="GOLGA2L5"/>
    <property type="match status" value="2"/>
</dbReference>
<reference key="1">
    <citation type="journal article" date="2008" name="BMC Genomics">
        <title>Genomic analysis of the chromosome 15q11-q13 Prader-Willi syndrome region and characterization of transcripts for GOLGA8E and WHCD1L1 from the proximal breakpoint region.</title>
        <authorList>
            <person name="Jiang Y.-H."/>
            <person name="Wauki K."/>
            <person name="Liu Q."/>
            <person name="Bressler J."/>
            <person name="Pan Y."/>
            <person name="Kashork C.D."/>
            <person name="Shaffer L.G."/>
            <person name="Beaudet A.L."/>
        </authorList>
    </citation>
    <scope>NUCLEOTIDE SEQUENCE [MRNA] (ISOFORM 4)</scope>
</reference>
<reference key="2">
    <citation type="journal article" date="2006" name="Nature">
        <title>Analysis of the DNA sequence and duplication history of human chromosome 15.</title>
        <authorList>
            <person name="Zody M.C."/>
            <person name="Garber M."/>
            <person name="Sharpe T."/>
            <person name="Young S.K."/>
            <person name="Rowen L."/>
            <person name="O'Neill K."/>
            <person name="Whittaker C.A."/>
            <person name="Kamal M."/>
            <person name="Chang J.L."/>
            <person name="Cuomo C.A."/>
            <person name="Dewar K."/>
            <person name="FitzGerald M.G."/>
            <person name="Kodira C.D."/>
            <person name="Madan A."/>
            <person name="Qin S."/>
            <person name="Yang X."/>
            <person name="Abbasi N."/>
            <person name="Abouelleil A."/>
            <person name="Arachchi H.M."/>
            <person name="Baradarani L."/>
            <person name="Birditt B."/>
            <person name="Bloom S."/>
            <person name="Bloom T."/>
            <person name="Borowsky M.L."/>
            <person name="Burke J."/>
            <person name="Butler J."/>
            <person name="Cook A."/>
            <person name="DeArellano K."/>
            <person name="DeCaprio D."/>
            <person name="Dorris L. III"/>
            <person name="Dors M."/>
            <person name="Eichler E.E."/>
            <person name="Engels R."/>
            <person name="Fahey J."/>
            <person name="Fleetwood P."/>
            <person name="Friedman C."/>
            <person name="Gearin G."/>
            <person name="Hall J.L."/>
            <person name="Hensley G."/>
            <person name="Johnson E."/>
            <person name="Jones C."/>
            <person name="Kamat A."/>
            <person name="Kaur A."/>
            <person name="Locke D.P."/>
            <person name="Madan A."/>
            <person name="Munson G."/>
            <person name="Jaffe D.B."/>
            <person name="Lui A."/>
            <person name="Macdonald P."/>
            <person name="Mauceli E."/>
            <person name="Naylor J.W."/>
            <person name="Nesbitt R."/>
            <person name="Nicol R."/>
            <person name="O'Leary S.B."/>
            <person name="Ratcliffe A."/>
            <person name="Rounsley S."/>
            <person name="She X."/>
            <person name="Sneddon K.M.B."/>
            <person name="Stewart S."/>
            <person name="Sougnez C."/>
            <person name="Stone S.M."/>
            <person name="Topham K."/>
            <person name="Vincent D."/>
            <person name="Wang S."/>
            <person name="Zimmer A.R."/>
            <person name="Birren B.W."/>
            <person name="Hood L."/>
            <person name="Lander E.S."/>
            <person name="Nusbaum C."/>
        </authorList>
    </citation>
    <scope>NUCLEOTIDE SEQUENCE [LARGE SCALE GENOMIC DNA]</scope>
</reference>
<reference key="3">
    <citation type="journal article" date="2004" name="Genome Res.">
        <title>The status, quality, and expansion of the NIH full-length cDNA project: the Mammalian Gene Collection (MGC).</title>
        <authorList>
            <consortium name="The MGC Project Team"/>
        </authorList>
    </citation>
    <scope>NUCLEOTIDE SEQUENCE [LARGE SCALE MRNA] (ISOFORM 4)</scope>
    <source>
        <tissue>Testis</tissue>
    </source>
</reference>
<reference key="4">
    <citation type="journal article" date="2007" name="BMC Genomics">
        <title>The full-ORF clone resource of the German cDNA consortium.</title>
        <authorList>
            <person name="Bechtel S."/>
            <person name="Rosenfelder H."/>
            <person name="Duda A."/>
            <person name="Schmidt C.P."/>
            <person name="Ernst U."/>
            <person name="Wellenreuther R."/>
            <person name="Mehrle A."/>
            <person name="Schuster C."/>
            <person name="Bahr A."/>
            <person name="Bloecker H."/>
            <person name="Heubner D."/>
            <person name="Hoerlein A."/>
            <person name="Michel G."/>
            <person name="Wedler H."/>
            <person name="Koehrer K."/>
            <person name="Ottenwaelder B."/>
            <person name="Poustka A."/>
            <person name="Wiemann S."/>
            <person name="Schupp I."/>
        </authorList>
    </citation>
    <scope>NUCLEOTIDE SEQUENCE [LARGE SCALE MRNA] OF 376-636 (ISOFORM 1)</scope>
    <source>
        <tissue>Testis</tissue>
    </source>
</reference>
<gene>
    <name evidence="4" type="primary">GOLGA8F</name>
</gene>
<name>GOG8F_HUMAN</name>